<feature type="chain" id="PRO_0000274591" description="Speckle-type POZ protein-like B">
    <location>
        <begin position="1"/>
        <end position="392"/>
    </location>
</feature>
<feature type="domain" description="MATH" evidence="3">
    <location>
        <begin position="31"/>
        <end position="161"/>
    </location>
</feature>
<feature type="domain" description="BTB" evidence="2">
    <location>
        <begin position="200"/>
        <end position="267"/>
    </location>
</feature>
<feature type="sequence conflict" description="In Ref. 2; AAI25866." evidence="4" ref="2">
    <original>P</original>
    <variation>S</variation>
    <location>
        <position position="9"/>
    </location>
</feature>
<evidence type="ECO:0000250" key="1"/>
<evidence type="ECO:0000255" key="2">
    <source>
        <dbReference type="PROSITE-ProRule" id="PRU00037"/>
    </source>
</evidence>
<evidence type="ECO:0000255" key="3">
    <source>
        <dbReference type="PROSITE-ProRule" id="PRU00129"/>
    </source>
</evidence>
<evidence type="ECO:0000305" key="4"/>
<proteinExistence type="evidence at transcript level"/>
<gene>
    <name type="primary">spoplb</name>
    <name type="ORF">zgc:153365</name>
</gene>
<accession>A0JMG1</accession>
<sequence length="392" mass="44248">MSRVPTPPPPGEMTSGPVAESWCYTQVKVVKFSYMWTINNFSFCREEMGEVVRSSTFSSGPNDKMKWCLRVNPKGLDDESKDYLSLYLLLVSCPKSEVRAKFKFSLLNAKREETKAMESQRAYRFVQGKDWGFKKFIRRDFLLDEANGLLPDDKLTLFCEVSVVQDSVNISGQSNTNMLKVPECQLSDDLGNLWEGSRFTDCSLFVGGQEFKAHKSILAARSPVFNAMFEHKMEESKKNRVDISDVEPDVFREMMVFIYTGKAPNLEKMADNLLAAADKYALERLKVLCEEALCNSLSVENVADVLILADLHSAEQLKAQAIDFINRCSVLRQLGCKDGKNWNSNHAADIMETAGWKAMIQSHPHLVAEAFRALASAQCTPFGLPRKRLKQS</sequence>
<dbReference type="EMBL" id="BX323597">
    <property type="status" value="NOT_ANNOTATED_CDS"/>
    <property type="molecule type" value="Genomic_DNA"/>
</dbReference>
<dbReference type="EMBL" id="BC125865">
    <property type="protein sequence ID" value="AAI25866.1"/>
    <property type="status" value="ALT_FRAME"/>
    <property type="molecule type" value="mRNA"/>
</dbReference>
<dbReference type="RefSeq" id="NP_001073438.1">
    <property type="nucleotide sequence ID" value="NM_001079969.1"/>
</dbReference>
<dbReference type="SMR" id="A0JMG1"/>
<dbReference type="FunCoup" id="A0JMG1">
    <property type="interactions" value="800"/>
</dbReference>
<dbReference type="STRING" id="7955.ENSDARP00000103804"/>
<dbReference type="PaxDb" id="7955-ENSDARP00000103804"/>
<dbReference type="Ensembl" id="ENSDART00000109418">
    <property type="protein sequence ID" value="ENSDARP00000103804"/>
    <property type="gene ID" value="ENSDARG00000003974"/>
</dbReference>
<dbReference type="GeneID" id="558170"/>
<dbReference type="KEGG" id="dre:558170"/>
<dbReference type="AGR" id="ZFIN:ZDB-GENE-061103-277"/>
<dbReference type="CTD" id="558170"/>
<dbReference type="ZFIN" id="ZDB-GENE-061103-277">
    <property type="gene designation" value="spoplb"/>
</dbReference>
<dbReference type="eggNOG" id="KOG1987">
    <property type="taxonomic scope" value="Eukaryota"/>
</dbReference>
<dbReference type="HOGENOM" id="CLU_004253_2_0_1"/>
<dbReference type="InParanoid" id="A0JMG1"/>
<dbReference type="OMA" id="DRYHAMD"/>
<dbReference type="OrthoDB" id="6359816at2759"/>
<dbReference type="PhylomeDB" id="A0JMG1"/>
<dbReference type="TreeFam" id="TF313419"/>
<dbReference type="UniPathway" id="UPA00143"/>
<dbReference type="PRO" id="PR:A0JMG1"/>
<dbReference type="Proteomes" id="UP000000437">
    <property type="component" value="Chromosome 11"/>
</dbReference>
<dbReference type="Bgee" id="ENSDARG00000003974">
    <property type="expression patterns" value="Expressed in testis and 27 other cell types or tissues"/>
</dbReference>
<dbReference type="GO" id="GO:0031463">
    <property type="term" value="C:Cul3-RING ubiquitin ligase complex"/>
    <property type="evidence" value="ECO:0000250"/>
    <property type="project" value="UniProtKB"/>
</dbReference>
<dbReference type="GO" id="GO:0005737">
    <property type="term" value="C:cytoplasm"/>
    <property type="evidence" value="ECO:0000318"/>
    <property type="project" value="GO_Central"/>
</dbReference>
<dbReference type="GO" id="GO:0005634">
    <property type="term" value="C:nucleus"/>
    <property type="evidence" value="ECO:0000318"/>
    <property type="project" value="GO_Central"/>
</dbReference>
<dbReference type="GO" id="GO:0031625">
    <property type="term" value="F:ubiquitin protein ligase binding"/>
    <property type="evidence" value="ECO:0000318"/>
    <property type="project" value="GO_Central"/>
</dbReference>
<dbReference type="GO" id="GO:0031397">
    <property type="term" value="P:negative regulation of protein ubiquitination"/>
    <property type="evidence" value="ECO:0000250"/>
    <property type="project" value="UniProtKB"/>
</dbReference>
<dbReference type="GO" id="GO:0043161">
    <property type="term" value="P:proteasome-mediated ubiquitin-dependent protein catabolic process"/>
    <property type="evidence" value="ECO:0000250"/>
    <property type="project" value="UniProtKB"/>
</dbReference>
<dbReference type="GO" id="GO:0016567">
    <property type="term" value="P:protein ubiquitination"/>
    <property type="evidence" value="ECO:0007669"/>
    <property type="project" value="UniProtKB-UniPathway"/>
</dbReference>
<dbReference type="GO" id="GO:0030162">
    <property type="term" value="P:regulation of proteolysis"/>
    <property type="evidence" value="ECO:0000318"/>
    <property type="project" value="GO_Central"/>
</dbReference>
<dbReference type="CDD" id="cd18519">
    <property type="entry name" value="BACK_SPOPL"/>
    <property type="match status" value="1"/>
</dbReference>
<dbReference type="CDD" id="cd18343">
    <property type="entry name" value="BTB_POZ_SPOPL"/>
    <property type="match status" value="1"/>
</dbReference>
<dbReference type="FunFam" id="2.60.210.10:FF:000028">
    <property type="entry name" value="Speckle-type POZ protein-like"/>
    <property type="match status" value="1"/>
</dbReference>
<dbReference type="FunFam" id="3.30.710.10:FF:000008">
    <property type="entry name" value="Speckle-type POZ protein-like a"/>
    <property type="match status" value="1"/>
</dbReference>
<dbReference type="Gene3D" id="6.10.250.3030">
    <property type="match status" value="1"/>
</dbReference>
<dbReference type="Gene3D" id="6.20.250.50">
    <property type="match status" value="1"/>
</dbReference>
<dbReference type="Gene3D" id="2.60.210.10">
    <property type="entry name" value="Apoptosis, Tumor Necrosis Factor Receptor Associated Protein 2, Chain A"/>
    <property type="match status" value="1"/>
</dbReference>
<dbReference type="Gene3D" id="3.30.710.10">
    <property type="entry name" value="Potassium Channel Kv1.1, Chain A"/>
    <property type="match status" value="1"/>
</dbReference>
<dbReference type="InterPro" id="IPR000210">
    <property type="entry name" value="BTB/POZ_dom"/>
</dbReference>
<dbReference type="InterPro" id="IPR002083">
    <property type="entry name" value="MATH/TRAF_dom"/>
</dbReference>
<dbReference type="InterPro" id="IPR011333">
    <property type="entry name" value="SKP1/BTB/POZ_sf"/>
</dbReference>
<dbReference type="InterPro" id="IPR008974">
    <property type="entry name" value="TRAF-like"/>
</dbReference>
<dbReference type="PANTHER" id="PTHR24413">
    <property type="entry name" value="SPECKLE-TYPE POZ PROTEIN"/>
    <property type="match status" value="1"/>
</dbReference>
<dbReference type="Pfam" id="PF00651">
    <property type="entry name" value="BTB"/>
    <property type="match status" value="1"/>
</dbReference>
<dbReference type="Pfam" id="PF22486">
    <property type="entry name" value="MATH_2"/>
    <property type="match status" value="1"/>
</dbReference>
<dbReference type="SMART" id="SM00225">
    <property type="entry name" value="BTB"/>
    <property type="match status" value="1"/>
</dbReference>
<dbReference type="SMART" id="SM00061">
    <property type="entry name" value="MATH"/>
    <property type="match status" value="1"/>
</dbReference>
<dbReference type="SUPFAM" id="SSF54695">
    <property type="entry name" value="POZ domain"/>
    <property type="match status" value="1"/>
</dbReference>
<dbReference type="SUPFAM" id="SSF49599">
    <property type="entry name" value="TRAF domain-like"/>
    <property type="match status" value="1"/>
</dbReference>
<dbReference type="PROSITE" id="PS50097">
    <property type="entry name" value="BTB"/>
    <property type="match status" value="1"/>
</dbReference>
<dbReference type="PROSITE" id="PS50144">
    <property type="entry name" value="MATH"/>
    <property type="match status" value="1"/>
</dbReference>
<name>SPOLB_DANRE</name>
<protein>
    <recommendedName>
        <fullName>Speckle-type POZ protein-like B</fullName>
    </recommendedName>
    <alternativeName>
        <fullName>HIB homolog 3</fullName>
    </alternativeName>
</protein>
<organism>
    <name type="scientific">Danio rerio</name>
    <name type="common">Zebrafish</name>
    <name type="synonym">Brachydanio rerio</name>
    <dbReference type="NCBI Taxonomy" id="7955"/>
    <lineage>
        <taxon>Eukaryota</taxon>
        <taxon>Metazoa</taxon>
        <taxon>Chordata</taxon>
        <taxon>Craniata</taxon>
        <taxon>Vertebrata</taxon>
        <taxon>Euteleostomi</taxon>
        <taxon>Actinopterygii</taxon>
        <taxon>Neopterygii</taxon>
        <taxon>Teleostei</taxon>
        <taxon>Ostariophysi</taxon>
        <taxon>Cypriniformes</taxon>
        <taxon>Danionidae</taxon>
        <taxon>Danioninae</taxon>
        <taxon>Danio</taxon>
    </lineage>
</organism>
<keyword id="KW-0539">Nucleus</keyword>
<keyword id="KW-1185">Reference proteome</keyword>
<keyword id="KW-0833">Ubl conjugation pathway</keyword>
<comment type="function">
    <text evidence="1">Component of a cullin-RING-based BCR (BTB-CUL3-RBX1) E3 ubiquitin-protein ligase complex that mediates the ubiquitination and subsequent proteasomal degradation of target proteins, but with relatively low efficiency.</text>
</comment>
<comment type="pathway">
    <text>Protein modification; protein ubiquitination.</text>
</comment>
<comment type="subunit">
    <text evidence="1">Homodimer. Heterodimer with SPOP. Component of cullin-RING-based BCR (BTB-CUL3-RBX1) E3 ubiquitin-protein ligase complexes containing homodimeric SPOPL or the heterodimer formed by SPOP and SPOPL (By similarity).</text>
</comment>
<comment type="subcellular location">
    <subcellularLocation>
        <location evidence="1">Nucleus</location>
    </subcellularLocation>
</comment>
<comment type="similarity">
    <text evidence="4">Belongs to the Tdpoz family.</text>
</comment>
<comment type="sequence caution" evidence="4">
    <conflict type="frameshift">
        <sequence resource="EMBL-CDS" id="AAI25866"/>
    </conflict>
</comment>
<reference key="1">
    <citation type="journal article" date="2013" name="Nature">
        <title>The zebrafish reference genome sequence and its relationship to the human genome.</title>
        <authorList>
            <person name="Howe K."/>
            <person name="Clark M.D."/>
            <person name="Torroja C.F."/>
            <person name="Torrance J."/>
            <person name="Berthelot C."/>
            <person name="Muffato M."/>
            <person name="Collins J.E."/>
            <person name="Humphray S."/>
            <person name="McLaren K."/>
            <person name="Matthews L."/>
            <person name="McLaren S."/>
            <person name="Sealy I."/>
            <person name="Caccamo M."/>
            <person name="Churcher C."/>
            <person name="Scott C."/>
            <person name="Barrett J.C."/>
            <person name="Koch R."/>
            <person name="Rauch G.J."/>
            <person name="White S."/>
            <person name="Chow W."/>
            <person name="Kilian B."/>
            <person name="Quintais L.T."/>
            <person name="Guerra-Assuncao J.A."/>
            <person name="Zhou Y."/>
            <person name="Gu Y."/>
            <person name="Yen J."/>
            <person name="Vogel J.H."/>
            <person name="Eyre T."/>
            <person name="Redmond S."/>
            <person name="Banerjee R."/>
            <person name="Chi J."/>
            <person name="Fu B."/>
            <person name="Langley E."/>
            <person name="Maguire S.F."/>
            <person name="Laird G.K."/>
            <person name="Lloyd D."/>
            <person name="Kenyon E."/>
            <person name="Donaldson S."/>
            <person name="Sehra H."/>
            <person name="Almeida-King J."/>
            <person name="Loveland J."/>
            <person name="Trevanion S."/>
            <person name="Jones M."/>
            <person name="Quail M."/>
            <person name="Willey D."/>
            <person name="Hunt A."/>
            <person name="Burton J."/>
            <person name="Sims S."/>
            <person name="McLay K."/>
            <person name="Plumb B."/>
            <person name="Davis J."/>
            <person name="Clee C."/>
            <person name="Oliver K."/>
            <person name="Clark R."/>
            <person name="Riddle C."/>
            <person name="Elliot D."/>
            <person name="Threadgold G."/>
            <person name="Harden G."/>
            <person name="Ware D."/>
            <person name="Begum S."/>
            <person name="Mortimore B."/>
            <person name="Kerry G."/>
            <person name="Heath P."/>
            <person name="Phillimore B."/>
            <person name="Tracey A."/>
            <person name="Corby N."/>
            <person name="Dunn M."/>
            <person name="Johnson C."/>
            <person name="Wood J."/>
            <person name="Clark S."/>
            <person name="Pelan S."/>
            <person name="Griffiths G."/>
            <person name="Smith M."/>
            <person name="Glithero R."/>
            <person name="Howden P."/>
            <person name="Barker N."/>
            <person name="Lloyd C."/>
            <person name="Stevens C."/>
            <person name="Harley J."/>
            <person name="Holt K."/>
            <person name="Panagiotidis G."/>
            <person name="Lovell J."/>
            <person name="Beasley H."/>
            <person name="Henderson C."/>
            <person name="Gordon D."/>
            <person name="Auger K."/>
            <person name="Wright D."/>
            <person name="Collins J."/>
            <person name="Raisen C."/>
            <person name="Dyer L."/>
            <person name="Leung K."/>
            <person name="Robertson L."/>
            <person name="Ambridge K."/>
            <person name="Leongamornlert D."/>
            <person name="McGuire S."/>
            <person name="Gilderthorp R."/>
            <person name="Griffiths C."/>
            <person name="Manthravadi D."/>
            <person name="Nichol S."/>
            <person name="Barker G."/>
            <person name="Whitehead S."/>
            <person name="Kay M."/>
            <person name="Brown J."/>
            <person name="Murnane C."/>
            <person name="Gray E."/>
            <person name="Humphries M."/>
            <person name="Sycamore N."/>
            <person name="Barker D."/>
            <person name="Saunders D."/>
            <person name="Wallis J."/>
            <person name="Babbage A."/>
            <person name="Hammond S."/>
            <person name="Mashreghi-Mohammadi M."/>
            <person name="Barr L."/>
            <person name="Martin S."/>
            <person name="Wray P."/>
            <person name="Ellington A."/>
            <person name="Matthews N."/>
            <person name="Ellwood M."/>
            <person name="Woodmansey R."/>
            <person name="Clark G."/>
            <person name="Cooper J."/>
            <person name="Tromans A."/>
            <person name="Grafham D."/>
            <person name="Skuce C."/>
            <person name="Pandian R."/>
            <person name="Andrews R."/>
            <person name="Harrison E."/>
            <person name="Kimberley A."/>
            <person name="Garnett J."/>
            <person name="Fosker N."/>
            <person name="Hall R."/>
            <person name="Garner P."/>
            <person name="Kelly D."/>
            <person name="Bird C."/>
            <person name="Palmer S."/>
            <person name="Gehring I."/>
            <person name="Berger A."/>
            <person name="Dooley C.M."/>
            <person name="Ersan-Urun Z."/>
            <person name="Eser C."/>
            <person name="Geiger H."/>
            <person name="Geisler M."/>
            <person name="Karotki L."/>
            <person name="Kirn A."/>
            <person name="Konantz J."/>
            <person name="Konantz M."/>
            <person name="Oberlander M."/>
            <person name="Rudolph-Geiger S."/>
            <person name="Teucke M."/>
            <person name="Lanz C."/>
            <person name="Raddatz G."/>
            <person name="Osoegawa K."/>
            <person name="Zhu B."/>
            <person name="Rapp A."/>
            <person name="Widaa S."/>
            <person name="Langford C."/>
            <person name="Yang F."/>
            <person name="Schuster S.C."/>
            <person name="Carter N.P."/>
            <person name="Harrow J."/>
            <person name="Ning Z."/>
            <person name="Herrero J."/>
            <person name="Searle S.M."/>
            <person name="Enright A."/>
            <person name="Geisler R."/>
            <person name="Plasterk R.H."/>
            <person name="Lee C."/>
            <person name="Westerfield M."/>
            <person name="de Jong P.J."/>
            <person name="Zon L.I."/>
            <person name="Postlethwait J.H."/>
            <person name="Nusslein-Volhard C."/>
            <person name="Hubbard T.J."/>
            <person name="Roest Crollius H."/>
            <person name="Rogers J."/>
            <person name="Stemple D.L."/>
        </authorList>
    </citation>
    <scope>NUCLEOTIDE SEQUENCE [LARGE SCALE GENOMIC DNA]</scope>
    <source>
        <strain>Tuebingen</strain>
    </source>
</reference>
<reference key="2">
    <citation type="submission" date="2006-10" db="EMBL/GenBank/DDBJ databases">
        <authorList>
            <consortium name="NIH - Zebrafish Gene Collection (ZGC) project"/>
        </authorList>
    </citation>
    <scope>NUCLEOTIDE SEQUENCE [LARGE SCALE MRNA]</scope>
    <source>
        <tissue>Ovary</tissue>
    </source>
</reference>
<reference key="3">
    <citation type="journal article" date="2006" name="Dev. Cell">
        <title>A hedgehog-induced BTB protein modulates hedgehog signaling by degrading Ci/Gli transcription factor.</title>
        <authorList>
            <person name="Zhang Q."/>
            <person name="Zhang L."/>
            <person name="Wang B."/>
            <person name="Ou C.-Y."/>
            <person name="Chien C.-T."/>
            <person name="Jiang J."/>
        </authorList>
    </citation>
    <scope>IDENTIFICATION</scope>
</reference>